<keyword id="KW-0066">ATP synthesis</keyword>
<keyword id="KW-0067">ATP-binding</keyword>
<keyword id="KW-0997">Cell inner membrane</keyword>
<keyword id="KW-1003">Cell membrane</keyword>
<keyword id="KW-0139">CF(1)</keyword>
<keyword id="KW-0375">Hydrogen ion transport</keyword>
<keyword id="KW-0406">Ion transport</keyword>
<keyword id="KW-0472">Membrane</keyword>
<keyword id="KW-0547">Nucleotide-binding</keyword>
<keyword id="KW-1185">Reference proteome</keyword>
<keyword id="KW-1278">Translocase</keyword>
<keyword id="KW-0813">Transport</keyword>
<name>ATPA_AZOPC</name>
<gene>
    <name evidence="1" type="primary">atpA</name>
    <name type="ordered locus">CFPG_365</name>
</gene>
<evidence type="ECO:0000255" key="1">
    <source>
        <dbReference type="HAMAP-Rule" id="MF_01346"/>
    </source>
</evidence>
<reference key="1">
    <citation type="journal article" date="2008" name="Science">
        <title>Genome of an endosymbiont coupling N2 fixation to cellulolysis within RT protist cells in termite gut.</title>
        <authorList>
            <person name="Hongoh Y."/>
            <person name="Sharma V.K."/>
            <person name="Prakash T."/>
            <person name="Noda S."/>
            <person name="Toh H."/>
            <person name="Taylor T.D."/>
            <person name="Kudo T."/>
            <person name="Sakaki Y."/>
            <person name="Toyoda A."/>
            <person name="Hattori M."/>
            <person name="Ohkuma M."/>
        </authorList>
    </citation>
    <scope>NUCLEOTIDE SEQUENCE [LARGE SCALE GENOMIC DNA]</scope>
</reference>
<comment type="function">
    <text evidence="1">Produces ATP from ADP in the presence of a proton gradient across the membrane. The alpha chain is a regulatory subunit.</text>
</comment>
<comment type="catalytic activity">
    <reaction evidence="1">
        <text>ATP + H2O + 4 H(+)(in) = ADP + phosphate + 5 H(+)(out)</text>
        <dbReference type="Rhea" id="RHEA:57720"/>
        <dbReference type="ChEBI" id="CHEBI:15377"/>
        <dbReference type="ChEBI" id="CHEBI:15378"/>
        <dbReference type="ChEBI" id="CHEBI:30616"/>
        <dbReference type="ChEBI" id="CHEBI:43474"/>
        <dbReference type="ChEBI" id="CHEBI:456216"/>
        <dbReference type="EC" id="7.1.2.2"/>
    </reaction>
</comment>
<comment type="subunit">
    <text evidence="1">F-type ATPases have 2 components, CF(1) - the catalytic core - and CF(0) - the membrane proton channel. CF(1) has five subunits: alpha(3), beta(3), gamma(1), delta(1), epsilon(1). CF(0) has three main subunits: a(1), b(2) and c(9-12). The alpha and beta chains form an alternating ring which encloses part of the gamma chain. CF(1) is attached to CF(0) by a central stalk formed by the gamma and epsilon chains, while a peripheral stalk is formed by the delta and b chains.</text>
</comment>
<comment type="subcellular location">
    <subcellularLocation>
        <location evidence="1">Cell inner membrane</location>
        <topology evidence="1">Peripheral membrane protein</topology>
    </subcellularLocation>
</comment>
<comment type="similarity">
    <text evidence="1">Belongs to the ATPase alpha/beta chains family.</text>
</comment>
<feature type="chain" id="PRO_1000166515" description="ATP synthase subunit alpha">
    <location>
        <begin position="1"/>
        <end position="526"/>
    </location>
</feature>
<feature type="binding site" evidence="1">
    <location>
        <begin position="171"/>
        <end position="178"/>
    </location>
    <ligand>
        <name>ATP</name>
        <dbReference type="ChEBI" id="CHEBI:30616"/>
    </ligand>
</feature>
<feature type="site" description="Required for activity" evidence="1">
    <location>
        <position position="387"/>
    </location>
</feature>
<accession>B6YR06</accession>
<proteinExistence type="inferred from homology"/>
<sequence length="526" mass="57491">MSNIKSSEISDILKMQLKGIDSRIKFEEIGRVLQVSDGVARIFGLNNAETGELLQFDSGDMAVVMNLEEDNVGTVLLGETSKVQEGDRVKRTKRIVSIPMKNGMLGRVVNPFGSPLDGKGPILGKEIDMPLERKAPGVIYRCPVVEPLQTGIKSIDAMIPIGRGQRELIIGDRQVGKTTISIDTIINQKANYETGDPIYCIYVAIGQKASTVANIVNTLKEYGALNYTIIVVAAASDPAAMQFYAPFAGAAIGEFFRDTGRHALVVYDDLSKHAVAYREVSLVLRRPSGREAYPGDIFYLHSRLLERAAKIINNDSVAASMNDLPNNLRGQVKGGGSLTALPIIETQAGDVSAYIPTNVISITDGQIFLETGLFNAGIRPAVNVGISVSRVGGKAQIKAMKKVAGTLKIDQAQYRELEAFTKFGGDMDAVTRATLDKGRKNVELLIQSQYNPLPVEKEIAIIFIGIKGLLSDVPVERVREFETEFLDILEMKYRKDILDMLKQGVLDEKIEKKLNTIASIVANNFK</sequence>
<protein>
    <recommendedName>
        <fullName evidence="1">ATP synthase subunit alpha</fullName>
        <ecNumber evidence="1">7.1.2.2</ecNumber>
    </recommendedName>
    <alternativeName>
        <fullName evidence="1">ATP synthase F1 sector subunit alpha</fullName>
    </alternativeName>
    <alternativeName>
        <fullName evidence="1">F-ATPase subunit alpha</fullName>
    </alternativeName>
</protein>
<dbReference type="EC" id="7.1.2.2" evidence="1"/>
<dbReference type="EMBL" id="AP010656">
    <property type="protein sequence ID" value="BAG83628.1"/>
    <property type="molecule type" value="Genomic_DNA"/>
</dbReference>
<dbReference type="RefSeq" id="WP_012573389.1">
    <property type="nucleotide sequence ID" value="NC_011565.1"/>
</dbReference>
<dbReference type="SMR" id="B6YR06"/>
<dbReference type="STRING" id="511995.CFPG_365"/>
<dbReference type="KEGG" id="aps:CFPG_365"/>
<dbReference type="eggNOG" id="COG0056">
    <property type="taxonomic scope" value="Bacteria"/>
</dbReference>
<dbReference type="HOGENOM" id="CLU_010091_2_1_10"/>
<dbReference type="OrthoDB" id="9803053at2"/>
<dbReference type="Proteomes" id="UP000000723">
    <property type="component" value="Chromosome"/>
</dbReference>
<dbReference type="GO" id="GO:0005886">
    <property type="term" value="C:plasma membrane"/>
    <property type="evidence" value="ECO:0007669"/>
    <property type="project" value="UniProtKB-SubCell"/>
</dbReference>
<dbReference type="GO" id="GO:0045259">
    <property type="term" value="C:proton-transporting ATP synthase complex"/>
    <property type="evidence" value="ECO:0007669"/>
    <property type="project" value="UniProtKB-KW"/>
</dbReference>
<dbReference type="GO" id="GO:0043531">
    <property type="term" value="F:ADP binding"/>
    <property type="evidence" value="ECO:0007669"/>
    <property type="project" value="TreeGrafter"/>
</dbReference>
<dbReference type="GO" id="GO:0005524">
    <property type="term" value="F:ATP binding"/>
    <property type="evidence" value="ECO:0007669"/>
    <property type="project" value="UniProtKB-UniRule"/>
</dbReference>
<dbReference type="GO" id="GO:0046933">
    <property type="term" value="F:proton-transporting ATP synthase activity, rotational mechanism"/>
    <property type="evidence" value="ECO:0007669"/>
    <property type="project" value="UniProtKB-UniRule"/>
</dbReference>
<dbReference type="CDD" id="cd18113">
    <property type="entry name" value="ATP-synt_F1_alpha_C"/>
    <property type="match status" value="1"/>
</dbReference>
<dbReference type="CDD" id="cd18116">
    <property type="entry name" value="ATP-synt_F1_alpha_N"/>
    <property type="match status" value="1"/>
</dbReference>
<dbReference type="CDD" id="cd01132">
    <property type="entry name" value="F1-ATPase_alpha_CD"/>
    <property type="match status" value="1"/>
</dbReference>
<dbReference type="FunFam" id="1.20.150.20:FF:000001">
    <property type="entry name" value="ATP synthase subunit alpha"/>
    <property type="match status" value="1"/>
</dbReference>
<dbReference type="FunFam" id="2.40.30.20:FF:000001">
    <property type="entry name" value="ATP synthase subunit alpha"/>
    <property type="match status" value="1"/>
</dbReference>
<dbReference type="FunFam" id="3.40.50.300:FF:000002">
    <property type="entry name" value="ATP synthase subunit alpha"/>
    <property type="match status" value="1"/>
</dbReference>
<dbReference type="Gene3D" id="2.40.30.20">
    <property type="match status" value="1"/>
</dbReference>
<dbReference type="Gene3D" id="1.20.150.20">
    <property type="entry name" value="ATP synthase alpha/beta chain, C-terminal domain"/>
    <property type="match status" value="1"/>
</dbReference>
<dbReference type="Gene3D" id="3.40.50.300">
    <property type="entry name" value="P-loop containing nucleotide triphosphate hydrolases"/>
    <property type="match status" value="1"/>
</dbReference>
<dbReference type="HAMAP" id="MF_01346">
    <property type="entry name" value="ATP_synth_alpha_bact"/>
    <property type="match status" value="1"/>
</dbReference>
<dbReference type="InterPro" id="IPR023366">
    <property type="entry name" value="ATP_synth_asu-like_sf"/>
</dbReference>
<dbReference type="InterPro" id="IPR000793">
    <property type="entry name" value="ATP_synth_asu_C"/>
</dbReference>
<dbReference type="InterPro" id="IPR038376">
    <property type="entry name" value="ATP_synth_asu_C_sf"/>
</dbReference>
<dbReference type="InterPro" id="IPR033732">
    <property type="entry name" value="ATP_synth_F1_a_nt-bd_dom"/>
</dbReference>
<dbReference type="InterPro" id="IPR005294">
    <property type="entry name" value="ATP_synth_F1_asu"/>
</dbReference>
<dbReference type="InterPro" id="IPR020003">
    <property type="entry name" value="ATPase_a/bsu_AS"/>
</dbReference>
<dbReference type="InterPro" id="IPR004100">
    <property type="entry name" value="ATPase_F1/V1/A1_a/bsu_N"/>
</dbReference>
<dbReference type="InterPro" id="IPR036121">
    <property type="entry name" value="ATPase_F1/V1/A1_a/bsu_N_sf"/>
</dbReference>
<dbReference type="InterPro" id="IPR000194">
    <property type="entry name" value="ATPase_F1/V1/A1_a/bsu_nucl-bd"/>
</dbReference>
<dbReference type="InterPro" id="IPR027417">
    <property type="entry name" value="P-loop_NTPase"/>
</dbReference>
<dbReference type="NCBIfam" id="TIGR00962">
    <property type="entry name" value="atpA"/>
    <property type="match status" value="1"/>
</dbReference>
<dbReference type="NCBIfam" id="NF009884">
    <property type="entry name" value="PRK13343.1"/>
    <property type="match status" value="1"/>
</dbReference>
<dbReference type="PANTHER" id="PTHR48082">
    <property type="entry name" value="ATP SYNTHASE SUBUNIT ALPHA, MITOCHONDRIAL"/>
    <property type="match status" value="1"/>
</dbReference>
<dbReference type="PANTHER" id="PTHR48082:SF2">
    <property type="entry name" value="ATP SYNTHASE SUBUNIT ALPHA, MITOCHONDRIAL"/>
    <property type="match status" value="1"/>
</dbReference>
<dbReference type="Pfam" id="PF00006">
    <property type="entry name" value="ATP-synt_ab"/>
    <property type="match status" value="1"/>
</dbReference>
<dbReference type="Pfam" id="PF00306">
    <property type="entry name" value="ATP-synt_ab_C"/>
    <property type="match status" value="1"/>
</dbReference>
<dbReference type="Pfam" id="PF02874">
    <property type="entry name" value="ATP-synt_ab_N"/>
    <property type="match status" value="1"/>
</dbReference>
<dbReference type="SUPFAM" id="SSF47917">
    <property type="entry name" value="C-terminal domain of alpha and beta subunits of F1 ATP synthase"/>
    <property type="match status" value="1"/>
</dbReference>
<dbReference type="SUPFAM" id="SSF50615">
    <property type="entry name" value="N-terminal domain of alpha and beta subunits of F1 ATP synthase"/>
    <property type="match status" value="1"/>
</dbReference>
<dbReference type="SUPFAM" id="SSF52540">
    <property type="entry name" value="P-loop containing nucleoside triphosphate hydrolases"/>
    <property type="match status" value="1"/>
</dbReference>
<dbReference type="PROSITE" id="PS00152">
    <property type="entry name" value="ATPASE_ALPHA_BETA"/>
    <property type="match status" value="1"/>
</dbReference>
<organism>
    <name type="scientific">Azobacteroides pseudotrichonymphae genomovar. CFP2</name>
    <dbReference type="NCBI Taxonomy" id="511995"/>
    <lineage>
        <taxon>Bacteria</taxon>
        <taxon>Pseudomonadati</taxon>
        <taxon>Bacteroidota</taxon>
        <taxon>Bacteroidia</taxon>
        <taxon>Bacteroidales</taxon>
        <taxon>Candidatus Azobacteroides</taxon>
    </lineage>
</organism>